<evidence type="ECO:0000255" key="1">
    <source>
        <dbReference type="HAMAP-Rule" id="MF_01852"/>
    </source>
</evidence>
<evidence type="ECO:0000256" key="2">
    <source>
        <dbReference type="SAM" id="MobiDB-lite"/>
    </source>
</evidence>
<accession>Q87KE2</accession>
<reference key="1">
    <citation type="journal article" date="2003" name="Lancet">
        <title>Genome sequence of Vibrio parahaemolyticus: a pathogenic mechanism distinct from that of V. cholerae.</title>
        <authorList>
            <person name="Makino K."/>
            <person name="Oshima K."/>
            <person name="Kurokawa K."/>
            <person name="Yokoyama K."/>
            <person name="Uda T."/>
            <person name="Tagomori K."/>
            <person name="Iijima Y."/>
            <person name="Najima M."/>
            <person name="Nakano M."/>
            <person name="Yamashita A."/>
            <person name="Kubota Y."/>
            <person name="Kimura S."/>
            <person name="Yasunaga T."/>
            <person name="Honda T."/>
            <person name="Shinagawa H."/>
            <person name="Hattori M."/>
            <person name="Iida T."/>
        </authorList>
    </citation>
    <scope>NUCLEOTIDE SEQUENCE [LARGE SCALE GENOMIC DNA]</scope>
    <source>
        <strain>RIMD 2210633</strain>
    </source>
</reference>
<protein>
    <recommendedName>
        <fullName evidence="1">Threonylcarbamoyl-AMP synthase</fullName>
        <shortName evidence="1">TC-AMP synthase</shortName>
        <ecNumber evidence="1">2.7.7.87</ecNumber>
    </recommendedName>
    <alternativeName>
        <fullName evidence="1">L-threonylcarbamoyladenylate synthase</fullName>
    </alternativeName>
    <alternativeName>
        <fullName evidence="1">t(6)A37 threonylcarbamoyladenosine biosynthesis protein TsaC</fullName>
    </alternativeName>
    <alternativeName>
        <fullName evidence="1">tRNA threonylcarbamoyladenosine biosynthesis protein TsaC</fullName>
    </alternativeName>
</protein>
<sequence length="185" mass="20280">MDNFEQVLNALQQGEVIAYPTEGVFGVGCDPDNPDAIQKLLDLKQRPVEKGLILIAASYEQLLPYIDESQLTPEQLATVHATWPGPYTWIMPASDKVSNWVSGQFDSIAVRVTDHPLVQKMCNAFGKPLTSTSANLSGLPPCMTTEEVEQQLGDKLVAILRGETSGRDKPSEIRDAKTSQILRQG</sequence>
<gene>
    <name evidence="1" type="primary">tsaC</name>
    <name type="synonym">rimN</name>
    <name type="ordered locus">VP3035</name>
</gene>
<feature type="chain" id="PRO_0000353005" description="Threonylcarbamoyl-AMP synthase">
    <location>
        <begin position="1"/>
        <end position="185"/>
    </location>
</feature>
<feature type="domain" description="YrdC-like" evidence="1">
    <location>
        <begin position="1"/>
        <end position="185"/>
    </location>
</feature>
<feature type="region of interest" description="Disordered" evidence="2">
    <location>
        <begin position="163"/>
        <end position="185"/>
    </location>
</feature>
<feature type="compositionally biased region" description="Basic and acidic residues" evidence="2">
    <location>
        <begin position="164"/>
        <end position="177"/>
    </location>
</feature>
<keyword id="KW-0067">ATP-binding</keyword>
<keyword id="KW-0963">Cytoplasm</keyword>
<keyword id="KW-0547">Nucleotide-binding</keyword>
<keyword id="KW-0548">Nucleotidyltransferase</keyword>
<keyword id="KW-0808">Transferase</keyword>
<keyword id="KW-0819">tRNA processing</keyword>
<name>TSAC_VIBPA</name>
<proteinExistence type="inferred from homology"/>
<dbReference type="EC" id="2.7.7.87" evidence="1"/>
<dbReference type="EMBL" id="BA000031">
    <property type="protein sequence ID" value="BAC61298.1"/>
    <property type="molecule type" value="Genomic_DNA"/>
</dbReference>
<dbReference type="RefSeq" id="NP_799414.1">
    <property type="nucleotide sequence ID" value="NC_004603.1"/>
</dbReference>
<dbReference type="RefSeq" id="WP_005461456.1">
    <property type="nucleotide sequence ID" value="NC_004603.1"/>
</dbReference>
<dbReference type="SMR" id="Q87KE2"/>
<dbReference type="GeneID" id="1190634"/>
<dbReference type="KEGG" id="vpa:VP3035"/>
<dbReference type="PATRIC" id="fig|223926.6.peg.2919"/>
<dbReference type="eggNOG" id="COG0009">
    <property type="taxonomic scope" value="Bacteria"/>
</dbReference>
<dbReference type="HOGENOM" id="CLU_031397_6_0_6"/>
<dbReference type="Proteomes" id="UP000002493">
    <property type="component" value="Chromosome 1"/>
</dbReference>
<dbReference type="GO" id="GO:0005737">
    <property type="term" value="C:cytoplasm"/>
    <property type="evidence" value="ECO:0007669"/>
    <property type="project" value="UniProtKB-SubCell"/>
</dbReference>
<dbReference type="GO" id="GO:0005524">
    <property type="term" value="F:ATP binding"/>
    <property type="evidence" value="ECO:0007669"/>
    <property type="project" value="UniProtKB-UniRule"/>
</dbReference>
<dbReference type="GO" id="GO:0003725">
    <property type="term" value="F:double-stranded RNA binding"/>
    <property type="evidence" value="ECO:0007669"/>
    <property type="project" value="InterPro"/>
</dbReference>
<dbReference type="GO" id="GO:0061710">
    <property type="term" value="F:L-threonylcarbamoyladenylate synthase"/>
    <property type="evidence" value="ECO:0007669"/>
    <property type="project" value="UniProtKB-EC"/>
</dbReference>
<dbReference type="GO" id="GO:0000049">
    <property type="term" value="F:tRNA binding"/>
    <property type="evidence" value="ECO:0007669"/>
    <property type="project" value="TreeGrafter"/>
</dbReference>
<dbReference type="GO" id="GO:0006450">
    <property type="term" value="P:regulation of translational fidelity"/>
    <property type="evidence" value="ECO:0007669"/>
    <property type="project" value="TreeGrafter"/>
</dbReference>
<dbReference type="GO" id="GO:0002949">
    <property type="term" value="P:tRNA threonylcarbamoyladenosine modification"/>
    <property type="evidence" value="ECO:0007669"/>
    <property type="project" value="UniProtKB-UniRule"/>
</dbReference>
<dbReference type="FunFam" id="3.90.870.10:FF:000004">
    <property type="entry name" value="Threonylcarbamoyl-AMP synthase"/>
    <property type="match status" value="1"/>
</dbReference>
<dbReference type="Gene3D" id="3.90.870.10">
    <property type="entry name" value="DHBP synthase"/>
    <property type="match status" value="1"/>
</dbReference>
<dbReference type="HAMAP" id="MF_01852">
    <property type="entry name" value="TsaC"/>
    <property type="match status" value="1"/>
</dbReference>
<dbReference type="InterPro" id="IPR017945">
    <property type="entry name" value="DHBP_synth_RibB-like_a/b_dom"/>
</dbReference>
<dbReference type="InterPro" id="IPR006070">
    <property type="entry name" value="Sua5-like_dom"/>
</dbReference>
<dbReference type="InterPro" id="IPR023535">
    <property type="entry name" value="TC-AMP_synthase"/>
</dbReference>
<dbReference type="InterPro" id="IPR050156">
    <property type="entry name" value="TC-AMP_synthase_SUA5"/>
</dbReference>
<dbReference type="NCBIfam" id="TIGR00057">
    <property type="entry name" value="L-threonylcarbamoyladenylate synthase"/>
    <property type="match status" value="1"/>
</dbReference>
<dbReference type="PANTHER" id="PTHR17490">
    <property type="entry name" value="SUA5"/>
    <property type="match status" value="1"/>
</dbReference>
<dbReference type="PANTHER" id="PTHR17490:SF18">
    <property type="entry name" value="THREONYLCARBAMOYL-AMP SYNTHASE"/>
    <property type="match status" value="1"/>
</dbReference>
<dbReference type="Pfam" id="PF01300">
    <property type="entry name" value="Sua5_yciO_yrdC"/>
    <property type="match status" value="1"/>
</dbReference>
<dbReference type="SUPFAM" id="SSF55821">
    <property type="entry name" value="YrdC/RibB"/>
    <property type="match status" value="1"/>
</dbReference>
<dbReference type="PROSITE" id="PS51163">
    <property type="entry name" value="YRDC"/>
    <property type="match status" value="1"/>
</dbReference>
<comment type="function">
    <text evidence="1">Required for the formation of a threonylcarbamoyl group on adenosine at position 37 (t(6)A37) in tRNAs that read codons beginning with adenine. Catalyzes the conversion of L-threonine, HCO(3)(-)/CO(2) and ATP to give threonylcarbamoyl-AMP (TC-AMP) as the acyladenylate intermediate, with the release of diphosphate.</text>
</comment>
<comment type="catalytic activity">
    <reaction evidence="1">
        <text>L-threonine + hydrogencarbonate + ATP = L-threonylcarbamoyladenylate + diphosphate + H2O</text>
        <dbReference type="Rhea" id="RHEA:36407"/>
        <dbReference type="ChEBI" id="CHEBI:15377"/>
        <dbReference type="ChEBI" id="CHEBI:17544"/>
        <dbReference type="ChEBI" id="CHEBI:30616"/>
        <dbReference type="ChEBI" id="CHEBI:33019"/>
        <dbReference type="ChEBI" id="CHEBI:57926"/>
        <dbReference type="ChEBI" id="CHEBI:73682"/>
        <dbReference type="EC" id="2.7.7.87"/>
    </reaction>
</comment>
<comment type="subcellular location">
    <subcellularLocation>
        <location evidence="1">Cytoplasm</location>
    </subcellularLocation>
</comment>
<comment type="similarity">
    <text evidence="1">Belongs to the SUA5 family. TsaC subfamily.</text>
</comment>
<organism>
    <name type="scientific">Vibrio parahaemolyticus serotype O3:K6 (strain RIMD 2210633)</name>
    <dbReference type="NCBI Taxonomy" id="223926"/>
    <lineage>
        <taxon>Bacteria</taxon>
        <taxon>Pseudomonadati</taxon>
        <taxon>Pseudomonadota</taxon>
        <taxon>Gammaproteobacteria</taxon>
        <taxon>Vibrionales</taxon>
        <taxon>Vibrionaceae</taxon>
        <taxon>Vibrio</taxon>
    </lineage>
</organism>